<dbReference type="EC" id="7.4.2.8" evidence="1"/>
<dbReference type="EMBL" id="CR931997">
    <property type="protein sequence ID" value="CAI37804.1"/>
    <property type="molecule type" value="Genomic_DNA"/>
</dbReference>
<dbReference type="RefSeq" id="WP_011274016.1">
    <property type="nucleotide sequence ID" value="NC_007164.1"/>
</dbReference>
<dbReference type="SMR" id="Q4JTQ3"/>
<dbReference type="STRING" id="306537.jk1630"/>
<dbReference type="KEGG" id="cjk:jk1630"/>
<dbReference type="PATRIC" id="fig|306537.10.peg.1649"/>
<dbReference type="eggNOG" id="COG0653">
    <property type="taxonomic scope" value="Bacteria"/>
</dbReference>
<dbReference type="HOGENOM" id="CLU_005314_3_2_11"/>
<dbReference type="OrthoDB" id="9805579at2"/>
<dbReference type="Proteomes" id="UP000000545">
    <property type="component" value="Chromosome"/>
</dbReference>
<dbReference type="GO" id="GO:0031522">
    <property type="term" value="C:cell envelope Sec protein transport complex"/>
    <property type="evidence" value="ECO:0007669"/>
    <property type="project" value="TreeGrafter"/>
</dbReference>
<dbReference type="GO" id="GO:0005829">
    <property type="term" value="C:cytosol"/>
    <property type="evidence" value="ECO:0007669"/>
    <property type="project" value="TreeGrafter"/>
</dbReference>
<dbReference type="GO" id="GO:0005886">
    <property type="term" value="C:plasma membrane"/>
    <property type="evidence" value="ECO:0007669"/>
    <property type="project" value="UniProtKB-SubCell"/>
</dbReference>
<dbReference type="GO" id="GO:0005524">
    <property type="term" value="F:ATP binding"/>
    <property type="evidence" value="ECO:0007669"/>
    <property type="project" value="UniProtKB-UniRule"/>
</dbReference>
<dbReference type="GO" id="GO:0008564">
    <property type="term" value="F:protein-exporting ATPase activity"/>
    <property type="evidence" value="ECO:0007669"/>
    <property type="project" value="UniProtKB-EC"/>
</dbReference>
<dbReference type="GO" id="GO:0065002">
    <property type="term" value="P:intracellular protein transmembrane transport"/>
    <property type="evidence" value="ECO:0007669"/>
    <property type="project" value="UniProtKB-UniRule"/>
</dbReference>
<dbReference type="GO" id="GO:0017038">
    <property type="term" value="P:protein import"/>
    <property type="evidence" value="ECO:0007669"/>
    <property type="project" value="InterPro"/>
</dbReference>
<dbReference type="GO" id="GO:0006605">
    <property type="term" value="P:protein targeting"/>
    <property type="evidence" value="ECO:0007669"/>
    <property type="project" value="UniProtKB-UniRule"/>
</dbReference>
<dbReference type="GO" id="GO:0043952">
    <property type="term" value="P:protein transport by the Sec complex"/>
    <property type="evidence" value="ECO:0007669"/>
    <property type="project" value="TreeGrafter"/>
</dbReference>
<dbReference type="CDD" id="cd17928">
    <property type="entry name" value="DEXDc_SecA"/>
    <property type="match status" value="1"/>
</dbReference>
<dbReference type="CDD" id="cd18803">
    <property type="entry name" value="SF2_C_secA"/>
    <property type="match status" value="1"/>
</dbReference>
<dbReference type="FunFam" id="1.10.3060.10:FF:000002">
    <property type="entry name" value="Preprotein translocase subunit SecA"/>
    <property type="match status" value="1"/>
</dbReference>
<dbReference type="FunFam" id="3.40.50.300:FF:000113">
    <property type="entry name" value="Preprotein translocase subunit SecA"/>
    <property type="match status" value="1"/>
</dbReference>
<dbReference type="FunFam" id="3.40.50.300:FF:000334">
    <property type="entry name" value="Protein translocase subunit SecA"/>
    <property type="match status" value="1"/>
</dbReference>
<dbReference type="FunFam" id="3.90.1440.10:FF:000002">
    <property type="entry name" value="Protein translocase subunit SecA"/>
    <property type="match status" value="1"/>
</dbReference>
<dbReference type="Gene3D" id="1.10.3060.10">
    <property type="entry name" value="Helical scaffold and wing domains of SecA"/>
    <property type="match status" value="1"/>
</dbReference>
<dbReference type="Gene3D" id="3.40.50.300">
    <property type="entry name" value="P-loop containing nucleotide triphosphate hydrolases"/>
    <property type="match status" value="2"/>
</dbReference>
<dbReference type="Gene3D" id="3.90.1440.10">
    <property type="entry name" value="SecA, preprotein cross-linking domain"/>
    <property type="match status" value="1"/>
</dbReference>
<dbReference type="HAMAP" id="MF_01382">
    <property type="entry name" value="SecA"/>
    <property type="match status" value="1"/>
</dbReference>
<dbReference type="InterPro" id="IPR014001">
    <property type="entry name" value="Helicase_ATP-bd"/>
</dbReference>
<dbReference type="InterPro" id="IPR027417">
    <property type="entry name" value="P-loop_NTPase"/>
</dbReference>
<dbReference type="InterPro" id="IPR000185">
    <property type="entry name" value="SecA"/>
</dbReference>
<dbReference type="InterPro" id="IPR020937">
    <property type="entry name" value="SecA_CS"/>
</dbReference>
<dbReference type="InterPro" id="IPR011115">
    <property type="entry name" value="SecA_DEAD"/>
</dbReference>
<dbReference type="InterPro" id="IPR014018">
    <property type="entry name" value="SecA_motor_DEAD"/>
</dbReference>
<dbReference type="InterPro" id="IPR011130">
    <property type="entry name" value="SecA_preprotein_X-link_dom"/>
</dbReference>
<dbReference type="InterPro" id="IPR044722">
    <property type="entry name" value="SecA_SF2_C"/>
</dbReference>
<dbReference type="InterPro" id="IPR011116">
    <property type="entry name" value="SecA_Wing/Scaffold"/>
</dbReference>
<dbReference type="InterPro" id="IPR036266">
    <property type="entry name" value="SecA_Wing/Scaffold_sf"/>
</dbReference>
<dbReference type="InterPro" id="IPR036670">
    <property type="entry name" value="SecA_X-link_sf"/>
</dbReference>
<dbReference type="NCBIfam" id="NF009538">
    <property type="entry name" value="PRK12904.1"/>
    <property type="match status" value="1"/>
</dbReference>
<dbReference type="NCBIfam" id="TIGR00963">
    <property type="entry name" value="secA"/>
    <property type="match status" value="1"/>
</dbReference>
<dbReference type="PANTHER" id="PTHR30612:SF0">
    <property type="entry name" value="CHLOROPLAST PROTEIN-TRANSPORTING ATPASE"/>
    <property type="match status" value="1"/>
</dbReference>
<dbReference type="PANTHER" id="PTHR30612">
    <property type="entry name" value="SECA INNER MEMBRANE COMPONENT OF SEC PROTEIN SECRETION SYSTEM"/>
    <property type="match status" value="1"/>
</dbReference>
<dbReference type="Pfam" id="PF21090">
    <property type="entry name" value="P-loop_SecA"/>
    <property type="match status" value="1"/>
</dbReference>
<dbReference type="Pfam" id="PF07517">
    <property type="entry name" value="SecA_DEAD"/>
    <property type="match status" value="1"/>
</dbReference>
<dbReference type="Pfam" id="PF01043">
    <property type="entry name" value="SecA_PP_bind"/>
    <property type="match status" value="1"/>
</dbReference>
<dbReference type="Pfam" id="PF07516">
    <property type="entry name" value="SecA_SW"/>
    <property type="match status" value="1"/>
</dbReference>
<dbReference type="PRINTS" id="PR00906">
    <property type="entry name" value="SECA"/>
</dbReference>
<dbReference type="SMART" id="SM00957">
    <property type="entry name" value="SecA_DEAD"/>
    <property type="match status" value="1"/>
</dbReference>
<dbReference type="SMART" id="SM00958">
    <property type="entry name" value="SecA_PP_bind"/>
    <property type="match status" value="1"/>
</dbReference>
<dbReference type="SUPFAM" id="SSF81886">
    <property type="entry name" value="Helical scaffold and wing domains of SecA"/>
    <property type="match status" value="1"/>
</dbReference>
<dbReference type="SUPFAM" id="SSF52540">
    <property type="entry name" value="P-loop containing nucleoside triphosphate hydrolases"/>
    <property type="match status" value="2"/>
</dbReference>
<dbReference type="SUPFAM" id="SSF81767">
    <property type="entry name" value="Pre-protein crosslinking domain of SecA"/>
    <property type="match status" value="1"/>
</dbReference>
<dbReference type="PROSITE" id="PS01312">
    <property type="entry name" value="SECA"/>
    <property type="match status" value="1"/>
</dbReference>
<dbReference type="PROSITE" id="PS51196">
    <property type="entry name" value="SECA_MOTOR_DEAD"/>
    <property type="match status" value="1"/>
</dbReference>
<gene>
    <name evidence="1" type="primary">secA1</name>
    <name type="ordered locus">jk1630</name>
</gene>
<evidence type="ECO:0000255" key="1">
    <source>
        <dbReference type="HAMAP-Rule" id="MF_01382"/>
    </source>
</evidence>
<protein>
    <recommendedName>
        <fullName evidence="1">Protein translocase subunit SecA 1</fullName>
        <ecNumber evidence="1">7.4.2.8</ecNumber>
    </recommendedName>
</protein>
<proteinExistence type="inferred from homology"/>
<organism>
    <name type="scientific">Corynebacterium jeikeium (strain K411)</name>
    <dbReference type="NCBI Taxonomy" id="306537"/>
    <lineage>
        <taxon>Bacteria</taxon>
        <taxon>Bacillati</taxon>
        <taxon>Actinomycetota</taxon>
        <taxon>Actinomycetes</taxon>
        <taxon>Mycobacteriales</taxon>
        <taxon>Corynebacteriaceae</taxon>
        <taxon>Corynebacterium</taxon>
    </lineage>
</organism>
<reference key="1">
    <citation type="journal article" date="2005" name="J. Bacteriol.">
        <title>Complete genome sequence and analysis of the multiresistant nosocomial pathogen Corynebacterium jeikeium K411, a lipid-requiring bacterium of the human skin flora.</title>
        <authorList>
            <person name="Tauch A."/>
            <person name="Kaiser O."/>
            <person name="Hain T."/>
            <person name="Goesmann A."/>
            <person name="Weisshaar B."/>
            <person name="Albersmeier A."/>
            <person name="Bekel T."/>
            <person name="Bischoff N."/>
            <person name="Brune I."/>
            <person name="Chakraborty T."/>
            <person name="Kalinowski J."/>
            <person name="Meyer F."/>
            <person name="Rupp O."/>
            <person name="Schneiker S."/>
            <person name="Viehoever P."/>
            <person name="Puehler A."/>
        </authorList>
    </citation>
    <scope>NUCLEOTIDE SEQUENCE [LARGE SCALE GENOMIC DNA]</scope>
    <source>
        <strain>K411</strain>
    </source>
</reference>
<sequence>MLGLSKILRMGEGRAVKRLAKIADQVMDLDEEYTKLTDEELQAKTDELKKRVQEDGESLDDILLEAFATAREASWRVLGQKHYKVQIMGGAGLHFGYVSEMKTGEGKTLTCVLPAYLNALSGKGVHVVTVNDYLAKRDAEWMGRVHRFLGLSTDVILSGKNPAERREAYNADITYGTNNEFGFDYLRDNMAHSLNDLVQRGHNYAIVDEVDSILIDEARTPLIISGPVEGSSKWFSAFAAIAPKLTRDIHYEVDERKKTVGVKEEGVEFVEDQLGIENLYAPEHSQLVSYLNNSIKAKELFTRDKDYIVRNGEVVIVDEFTGRILDGRRYNEGIHQAIEAKEHVEIKNENQTLATVTLQNYFRLYDKLAGMTGTAETEAAELKSTYKLDVAAIPTNKENKRKDNVDLIYKTQEAKFEAVAEDIAERVEIGQPVLVGTTSVERSEYLSRLLQRRGIKHNVLNAKYHEKEAEIVAQAGRLGAVTVATNMAGRGTDIVLGGNPDIIADINLRERGLDPVETPEEYEEAWDDEIEKVRKESKEEAEKVREVGGLYVLGTERHESRRIDNQLRGRSARQGDPGETRFYLSMRDDLMVRFVGQTMEAMMTRLNIPDDEAIDSKMVTNAIKGAQSQVESANFEMRKNVLKYDEVMNEQRKVIYGERRQILEGEDVEKQIRSMLKDTIEAYVDGATAEGYVEDWDLDTLWNALDSLYGPTFTHEELVEGDEYGRPGELSSSQLLDALLEDANREYDELEEKVSEVAGEEQMRGMERAALLNVVDQKWREHLYEMDYLKEGIGLRAMAQRDPLVEYQREGGDMFNRMKDGIKEETVRQLFLVRNQLKQAGQVHVEDPAAGNEGVAVDRATQTTMGG</sequence>
<comment type="function">
    <text evidence="1">Part of the Sec protein translocase complex. Interacts with the SecYEG preprotein conducting channel. Has a central role in coupling the hydrolysis of ATP to the transfer of proteins into and across the cell membrane, serving as an ATP-driven molecular motor driving the stepwise translocation of polypeptide chains across the membrane.</text>
</comment>
<comment type="catalytic activity">
    <reaction evidence="1">
        <text>ATP + H2O + cellular proteinSide 1 = ADP + phosphate + cellular proteinSide 2.</text>
        <dbReference type="EC" id="7.4.2.8"/>
    </reaction>
</comment>
<comment type="subunit">
    <text evidence="1">Monomer and homodimer. Part of the essential Sec protein translocation apparatus which comprises SecA, SecYEG and auxiliary proteins SecDF. Other proteins may also be involved.</text>
</comment>
<comment type="subcellular location">
    <subcellularLocation>
        <location evidence="1">Cell membrane</location>
        <topology evidence="1">Peripheral membrane protein</topology>
        <orientation evidence="1">Cytoplasmic side</orientation>
    </subcellularLocation>
    <subcellularLocation>
        <location evidence="1">Cytoplasm</location>
    </subcellularLocation>
    <text evidence="1">Distribution is 50-50.</text>
</comment>
<comment type="similarity">
    <text evidence="1">Belongs to the SecA family.</text>
</comment>
<accession>Q4JTQ3</accession>
<keyword id="KW-0067">ATP-binding</keyword>
<keyword id="KW-1003">Cell membrane</keyword>
<keyword id="KW-0963">Cytoplasm</keyword>
<keyword id="KW-0472">Membrane</keyword>
<keyword id="KW-0547">Nucleotide-binding</keyword>
<keyword id="KW-0653">Protein transport</keyword>
<keyword id="KW-1185">Reference proteome</keyword>
<keyword id="KW-1278">Translocase</keyword>
<keyword id="KW-0811">Translocation</keyword>
<keyword id="KW-0813">Transport</keyword>
<name>SECA1_CORJK</name>
<feature type="chain" id="PRO_0000318345" description="Protein translocase subunit SecA 1">
    <location>
        <begin position="1"/>
        <end position="867"/>
    </location>
</feature>
<feature type="binding site" evidence="1">
    <location>
        <position position="86"/>
    </location>
    <ligand>
        <name>ATP</name>
        <dbReference type="ChEBI" id="CHEBI:30616"/>
    </ligand>
</feature>
<feature type="binding site" evidence="1">
    <location>
        <begin position="104"/>
        <end position="108"/>
    </location>
    <ligand>
        <name>ATP</name>
        <dbReference type="ChEBI" id="CHEBI:30616"/>
    </ligand>
</feature>
<feature type="binding site" evidence="1">
    <location>
        <position position="493"/>
    </location>
    <ligand>
        <name>ATP</name>
        <dbReference type="ChEBI" id="CHEBI:30616"/>
    </ligand>
</feature>